<gene>
    <name type="ORF">CD36_85340</name>
</gene>
<keyword id="KW-0067">ATP-binding</keyword>
<keyword id="KW-0378">Hydrolase</keyword>
<keyword id="KW-0547">Nucleotide-binding</keyword>
<keyword id="KW-0576">Peroxisome</keyword>
<keyword id="KW-0645">Protease</keyword>
<keyword id="KW-0720">Serine protease</keyword>
<feature type="chain" id="PRO_0000395792" description="Lon protease homolog 2, peroxisomal">
    <location>
        <begin position="1"/>
        <end position="1247"/>
    </location>
</feature>
<feature type="domain" description="Lon N-terminal" evidence="3">
    <location>
        <begin position="22"/>
        <end position="402"/>
    </location>
</feature>
<feature type="domain" description="Lon proteolytic" evidence="2">
    <location>
        <begin position="989"/>
        <end position="1230"/>
    </location>
</feature>
<feature type="region of interest" description="Disordered" evidence="4">
    <location>
        <begin position="76"/>
        <end position="103"/>
    </location>
</feature>
<feature type="region of interest" description="Disordered" evidence="4">
    <location>
        <begin position="447"/>
        <end position="503"/>
    </location>
</feature>
<feature type="region of interest" description="Disordered" evidence="4">
    <location>
        <begin position="626"/>
        <end position="655"/>
    </location>
</feature>
<feature type="compositionally biased region" description="Low complexity" evidence="4">
    <location>
        <begin position="459"/>
        <end position="477"/>
    </location>
</feature>
<feature type="compositionally biased region" description="Basic and acidic residues" evidence="4">
    <location>
        <begin position="626"/>
        <end position="639"/>
    </location>
</feature>
<feature type="active site" evidence="1">
    <location>
        <position position="1099"/>
    </location>
</feature>
<feature type="active site" evidence="1">
    <location>
        <position position="1142"/>
    </location>
</feature>
<feature type="binding site" evidence="1">
    <location>
        <begin position="721"/>
        <end position="728"/>
    </location>
    <ligand>
        <name>ATP</name>
        <dbReference type="ChEBI" id="CHEBI:30616"/>
    </ligand>
</feature>
<protein>
    <recommendedName>
        <fullName evidence="1">Lon protease homolog 2, peroxisomal</fullName>
        <ecNumber evidence="1">3.4.21.53</ecNumber>
    </recommendedName>
</protein>
<evidence type="ECO:0000255" key="1">
    <source>
        <dbReference type="HAMAP-Rule" id="MF_03121"/>
    </source>
</evidence>
<evidence type="ECO:0000255" key="2">
    <source>
        <dbReference type="PROSITE-ProRule" id="PRU01122"/>
    </source>
</evidence>
<evidence type="ECO:0000255" key="3">
    <source>
        <dbReference type="PROSITE-ProRule" id="PRU01123"/>
    </source>
</evidence>
<evidence type="ECO:0000256" key="4">
    <source>
        <dbReference type="SAM" id="MobiDB-lite"/>
    </source>
</evidence>
<comment type="function">
    <text evidence="1">ATP-dependent serine protease that mediates the selective degradation of misfolded and unassembled polypeptides in the peroxisomal matrix. Necessary for type 2 peroxisome targeting signal (PTS2)-containing protein processing and facilitates peroxisome matrix protein import.</text>
</comment>
<comment type="catalytic activity">
    <reaction evidence="1">
        <text>Hydrolysis of proteins in presence of ATP.</text>
        <dbReference type="EC" id="3.4.21.53"/>
    </reaction>
</comment>
<comment type="subcellular location">
    <subcellularLocation>
        <location evidence="1">Peroxisome matrix</location>
    </subcellularLocation>
</comment>
<comment type="similarity">
    <text evidence="1">Belongs to the peptidase S16 family.</text>
</comment>
<proteinExistence type="inferred from homology"/>
<dbReference type="EC" id="3.4.21.53" evidence="1"/>
<dbReference type="EMBL" id="FM992690">
    <property type="protein sequence ID" value="CAX43035.1"/>
    <property type="molecule type" value="Genomic_DNA"/>
</dbReference>
<dbReference type="RefSeq" id="XP_002419441.1">
    <property type="nucleotide sequence ID" value="XM_002419396.1"/>
</dbReference>
<dbReference type="SMR" id="B9WEC4"/>
<dbReference type="GeneID" id="8047097"/>
<dbReference type="KEGG" id="cdu:CD36_85340"/>
<dbReference type="CGD" id="CAL0000160445">
    <property type="gene designation" value="Cd36_85340"/>
</dbReference>
<dbReference type="VEuPathDB" id="FungiDB:CD36_85340"/>
<dbReference type="eggNOG" id="KOG2004">
    <property type="taxonomic scope" value="Eukaryota"/>
</dbReference>
<dbReference type="HOGENOM" id="CLU_004109_4_0_1"/>
<dbReference type="OrthoDB" id="2411602at2759"/>
<dbReference type="Proteomes" id="UP000002605">
    <property type="component" value="Chromosome 3"/>
</dbReference>
<dbReference type="GO" id="GO:0005782">
    <property type="term" value="C:peroxisomal matrix"/>
    <property type="evidence" value="ECO:0007669"/>
    <property type="project" value="UniProtKB-SubCell"/>
</dbReference>
<dbReference type="GO" id="GO:0005524">
    <property type="term" value="F:ATP binding"/>
    <property type="evidence" value="ECO:0007669"/>
    <property type="project" value="UniProtKB-UniRule"/>
</dbReference>
<dbReference type="GO" id="GO:0016887">
    <property type="term" value="F:ATP hydrolysis activity"/>
    <property type="evidence" value="ECO:0007669"/>
    <property type="project" value="UniProtKB-UniRule"/>
</dbReference>
<dbReference type="GO" id="GO:0004176">
    <property type="term" value="F:ATP-dependent peptidase activity"/>
    <property type="evidence" value="ECO:0007669"/>
    <property type="project" value="UniProtKB-UniRule"/>
</dbReference>
<dbReference type="GO" id="GO:0004252">
    <property type="term" value="F:serine-type endopeptidase activity"/>
    <property type="evidence" value="ECO:0007669"/>
    <property type="project" value="UniProtKB-UniRule"/>
</dbReference>
<dbReference type="GO" id="GO:0016558">
    <property type="term" value="P:protein import into peroxisome matrix"/>
    <property type="evidence" value="ECO:0007669"/>
    <property type="project" value="UniProtKB-UniRule"/>
</dbReference>
<dbReference type="GO" id="GO:0016485">
    <property type="term" value="P:protein processing"/>
    <property type="evidence" value="ECO:0007669"/>
    <property type="project" value="UniProtKB-UniRule"/>
</dbReference>
<dbReference type="GO" id="GO:0006515">
    <property type="term" value="P:protein quality control for misfolded or incompletely synthesized proteins"/>
    <property type="evidence" value="ECO:0007669"/>
    <property type="project" value="UniProtKB-UniRule"/>
</dbReference>
<dbReference type="CDD" id="cd19500">
    <property type="entry name" value="RecA-like_Lon"/>
    <property type="match status" value="1"/>
</dbReference>
<dbReference type="FunFam" id="3.40.50.300:FF:000021">
    <property type="entry name" value="Lon protease homolog"/>
    <property type="match status" value="1"/>
</dbReference>
<dbReference type="FunFam" id="1.10.8.60:FF:000447">
    <property type="entry name" value="Lon protease homolog 2, peroxisomal"/>
    <property type="match status" value="1"/>
</dbReference>
<dbReference type="Gene3D" id="1.10.8.60">
    <property type="match status" value="1"/>
</dbReference>
<dbReference type="Gene3D" id="3.30.230.10">
    <property type="match status" value="1"/>
</dbReference>
<dbReference type="Gene3D" id="3.40.50.300">
    <property type="entry name" value="P-loop containing nucleotide triphosphate hydrolases"/>
    <property type="match status" value="1"/>
</dbReference>
<dbReference type="HAMAP" id="MF_03121">
    <property type="entry name" value="lonp2_euk"/>
    <property type="match status" value="1"/>
</dbReference>
<dbReference type="InterPro" id="IPR003593">
    <property type="entry name" value="AAA+_ATPase"/>
</dbReference>
<dbReference type="InterPro" id="IPR003959">
    <property type="entry name" value="ATPase_AAA_core"/>
</dbReference>
<dbReference type="InterPro" id="IPR054594">
    <property type="entry name" value="Lon_lid"/>
</dbReference>
<dbReference type="InterPro" id="IPR008269">
    <property type="entry name" value="Lon_proteolytic"/>
</dbReference>
<dbReference type="InterPro" id="IPR027065">
    <property type="entry name" value="Lon_Prtase"/>
</dbReference>
<dbReference type="InterPro" id="IPR003111">
    <property type="entry name" value="Lon_prtase_N"/>
</dbReference>
<dbReference type="InterPro" id="IPR027501">
    <property type="entry name" value="Lonp2_euk"/>
</dbReference>
<dbReference type="InterPro" id="IPR027417">
    <property type="entry name" value="P-loop_NTPase"/>
</dbReference>
<dbReference type="InterPro" id="IPR008268">
    <property type="entry name" value="Peptidase_S16_AS"/>
</dbReference>
<dbReference type="InterPro" id="IPR020568">
    <property type="entry name" value="Ribosomal_Su5_D2-typ_SF"/>
</dbReference>
<dbReference type="InterPro" id="IPR014721">
    <property type="entry name" value="Ribsml_uS5_D2-typ_fold_subgr"/>
</dbReference>
<dbReference type="PANTHER" id="PTHR10046">
    <property type="entry name" value="ATP DEPENDENT LON PROTEASE FAMILY MEMBER"/>
    <property type="match status" value="1"/>
</dbReference>
<dbReference type="Pfam" id="PF00004">
    <property type="entry name" value="AAA"/>
    <property type="match status" value="1"/>
</dbReference>
<dbReference type="Pfam" id="PF05362">
    <property type="entry name" value="Lon_C"/>
    <property type="match status" value="1"/>
</dbReference>
<dbReference type="Pfam" id="PF22667">
    <property type="entry name" value="Lon_lid"/>
    <property type="match status" value="1"/>
</dbReference>
<dbReference type="Pfam" id="PF02190">
    <property type="entry name" value="LON_substr_bdg"/>
    <property type="match status" value="1"/>
</dbReference>
<dbReference type="PRINTS" id="PR00830">
    <property type="entry name" value="ENDOLAPTASE"/>
</dbReference>
<dbReference type="SMART" id="SM00382">
    <property type="entry name" value="AAA"/>
    <property type="match status" value="1"/>
</dbReference>
<dbReference type="SUPFAM" id="SSF52540">
    <property type="entry name" value="P-loop containing nucleoside triphosphate hydrolases"/>
    <property type="match status" value="1"/>
</dbReference>
<dbReference type="SUPFAM" id="SSF54211">
    <property type="entry name" value="Ribosomal protein S5 domain 2-like"/>
    <property type="match status" value="1"/>
</dbReference>
<dbReference type="PROSITE" id="PS51787">
    <property type="entry name" value="LON_N"/>
    <property type="match status" value="1"/>
</dbReference>
<dbReference type="PROSITE" id="PS51786">
    <property type="entry name" value="LON_PROTEOLYTIC"/>
    <property type="match status" value="1"/>
</dbReference>
<dbReference type="PROSITE" id="PS01046">
    <property type="entry name" value="LON_SER"/>
    <property type="match status" value="1"/>
</dbReference>
<reference key="1">
    <citation type="journal article" date="2009" name="Genome Res.">
        <title>Comparative genomics of the fungal pathogens Candida dubliniensis and Candida albicans.</title>
        <authorList>
            <person name="Jackson A.P."/>
            <person name="Gamble J.A."/>
            <person name="Yeomans T."/>
            <person name="Moran G.P."/>
            <person name="Saunders D."/>
            <person name="Harris D."/>
            <person name="Aslett M."/>
            <person name="Barrell J.F."/>
            <person name="Butler G."/>
            <person name="Citiulo F."/>
            <person name="Coleman D.C."/>
            <person name="de Groot P.W.J."/>
            <person name="Goodwin T.J."/>
            <person name="Quail M.A."/>
            <person name="McQuillan J."/>
            <person name="Munro C.A."/>
            <person name="Pain A."/>
            <person name="Poulter R.T."/>
            <person name="Rajandream M.A."/>
            <person name="Renauld H."/>
            <person name="Spiering M.J."/>
            <person name="Tivey A."/>
            <person name="Gow N.A.R."/>
            <person name="Barrell B."/>
            <person name="Sullivan D.J."/>
            <person name="Berriman M."/>
        </authorList>
    </citation>
    <scope>NUCLEOTIDE SEQUENCE [LARGE SCALE GENOMIC DNA]</scope>
    <source>
        <strain>CD36 / ATCC MYA-646 / CBS 7987 / NCPF 3949 / NRRL Y-17841</strain>
    </source>
</reference>
<organism>
    <name type="scientific">Candida dubliniensis (strain CD36 / ATCC MYA-646 / CBS 7987 / NCPF 3949 / NRRL Y-17841)</name>
    <name type="common">Yeast</name>
    <dbReference type="NCBI Taxonomy" id="573826"/>
    <lineage>
        <taxon>Eukaryota</taxon>
        <taxon>Fungi</taxon>
        <taxon>Dikarya</taxon>
        <taxon>Ascomycota</taxon>
        <taxon>Saccharomycotina</taxon>
        <taxon>Pichiomycetes</taxon>
        <taxon>Debaryomycetaceae</taxon>
        <taxon>Candida/Lodderomyces clade</taxon>
        <taxon>Candida</taxon>
    </lineage>
</organism>
<name>LONP2_CANDC</name>
<sequence length="1247" mass="139848">MAKYNNNNYANKATNLKQQVVLPTYTLDSNLVLLPGIMYNVTFSRFKAAALLYRYKNFISQVSIINNLLSEYDFNSGNSNEEERSETEQKIEQSSLGQPETYHEINPSVISTEAVEGIKEFFQYETNMKTGRGGKGEKEAKSTNDGIKEFDWLTLAIIPNLDKIKDPETNYSIGDAAKLTNVVTVARIIGIVDDSTNIKLTLQAITRGVQITDDSKMNQHKNGLKTNEQVIGIDWNHNVSDLKGKFNALQKNYQQLFQSIDKFLIDYREALDYNKNNSNNKNGNLSLIKGNATINNNKNSDDKSNQDIKSQNLLTLNPLANALYMQLVGSKDFNKAFHRLEKLFSQVSKNDEYKIDNETYLRLVDLTCGILPFPNFQKLALLNKYKLDDRSVLINEMILQLIQIFENLQTNNSFVNNWFHSEATNIQKANVVANQLKSIRNLLEGMTKNRPIKSNKRNPGPASSSGPSFSNGKSSPGRANARPKSNHQDGFNGNDGDYNDVDDDDDGDEDLKAIFNFIKHKLPTISTLSADSKRLILKDFKRVKASANSPGGGGNSDFHVLRNYLEIVMDIPWDNYVTKFKSNKDIDLKLAKKQLDDDHYGLEHVKKRLIQYLVVLKLLGINAEKDQSDKSQPIKDNSKDSPNSSSKALTKSPTSSLSRKTISSIVIANKDETYLAKQQAKTTNQKSITEAKTNPSTTMITSNESIHVSKNNKSPIIMLAGPPGTGKTSLAKSIASALGRNFQRISLGGIKDESEIRGHRRTYVGAMPGLLIQALRKSRCMNPVILLDEIDKVIGGNNSGGVNKFNGDPSAALLEVLDPEQNNTFIDHYLGFPIDLSQVIFICTANDPWNMTRPLLDRLETIEIGAYDYNEKLIIGKKYLLPRQIKRNGFPVVDTKKMTTVVAGSSNQDEFIRINDATMKKVILDYTRGEAGVRNFERRLGTLCRFKAVEYCEWLNKDIKNYNPIIDENDLPIYLGVPYSSGDVTTEGTVGVGVVHGLSYNSDGSGSVLVFESIGFDRRISNKEHNGGNGATLNMTGRLGEVLMESGKIGLVFIKSMIYKNILKFDNNNNNKHLLLDKYNNLDIHMHVPMGSVSKDGPSAGVTMALSFLSVLLDKPVPSDIAMTGEITLRGIILPIGGVKEKLMGAHLNSNIKRMIVPRENRKDLIKEYSRSIEEAGEVLDHHLINDLIKDNEDKEFKLTQVEEYYQNKYGISLFYAKEFYDIIKIVWNEDEVLLKQDNSRLLEYHI</sequence>
<accession>B9WEC4</accession>